<sequence length="101" mass="11392">MIIVYISLAVLAVSIIFLGVTVIQNKKKIDPALKELSSVTQAMQKQIEGLKTETELLTQKQKKIQQDVQIKKYTLQQTAAEVKEVPQAVKEVWQAGHFNSR</sequence>
<name>YOXC_BACSU</name>
<feature type="chain" id="PRO_0000049668" description="Uncharacterized protein YoxC">
    <location>
        <begin position="1"/>
        <end position="101"/>
    </location>
</feature>
<reference key="1">
    <citation type="journal article" date="1997" name="Nature">
        <title>The complete genome sequence of the Gram-positive bacterium Bacillus subtilis.</title>
        <authorList>
            <person name="Kunst F."/>
            <person name="Ogasawara N."/>
            <person name="Moszer I."/>
            <person name="Albertini A.M."/>
            <person name="Alloni G."/>
            <person name="Azevedo V."/>
            <person name="Bertero M.G."/>
            <person name="Bessieres P."/>
            <person name="Bolotin A."/>
            <person name="Borchert S."/>
            <person name="Borriss R."/>
            <person name="Boursier L."/>
            <person name="Brans A."/>
            <person name="Braun M."/>
            <person name="Brignell S.C."/>
            <person name="Bron S."/>
            <person name="Brouillet S."/>
            <person name="Bruschi C.V."/>
            <person name="Caldwell B."/>
            <person name="Capuano V."/>
            <person name="Carter N.M."/>
            <person name="Choi S.-K."/>
            <person name="Codani J.-J."/>
            <person name="Connerton I.F."/>
            <person name="Cummings N.J."/>
            <person name="Daniel R.A."/>
            <person name="Denizot F."/>
            <person name="Devine K.M."/>
            <person name="Duesterhoeft A."/>
            <person name="Ehrlich S.D."/>
            <person name="Emmerson P.T."/>
            <person name="Entian K.-D."/>
            <person name="Errington J."/>
            <person name="Fabret C."/>
            <person name="Ferrari E."/>
            <person name="Foulger D."/>
            <person name="Fritz C."/>
            <person name="Fujita M."/>
            <person name="Fujita Y."/>
            <person name="Fuma S."/>
            <person name="Galizzi A."/>
            <person name="Galleron N."/>
            <person name="Ghim S.-Y."/>
            <person name="Glaser P."/>
            <person name="Goffeau A."/>
            <person name="Golightly E.J."/>
            <person name="Grandi G."/>
            <person name="Guiseppi G."/>
            <person name="Guy B.J."/>
            <person name="Haga K."/>
            <person name="Haiech J."/>
            <person name="Harwood C.R."/>
            <person name="Henaut A."/>
            <person name="Hilbert H."/>
            <person name="Holsappel S."/>
            <person name="Hosono S."/>
            <person name="Hullo M.-F."/>
            <person name="Itaya M."/>
            <person name="Jones L.-M."/>
            <person name="Joris B."/>
            <person name="Karamata D."/>
            <person name="Kasahara Y."/>
            <person name="Klaerr-Blanchard M."/>
            <person name="Klein C."/>
            <person name="Kobayashi Y."/>
            <person name="Koetter P."/>
            <person name="Koningstein G."/>
            <person name="Krogh S."/>
            <person name="Kumano M."/>
            <person name="Kurita K."/>
            <person name="Lapidus A."/>
            <person name="Lardinois S."/>
            <person name="Lauber J."/>
            <person name="Lazarevic V."/>
            <person name="Lee S.-M."/>
            <person name="Levine A."/>
            <person name="Liu H."/>
            <person name="Masuda S."/>
            <person name="Mauel C."/>
            <person name="Medigue C."/>
            <person name="Medina N."/>
            <person name="Mellado R.P."/>
            <person name="Mizuno M."/>
            <person name="Moestl D."/>
            <person name="Nakai S."/>
            <person name="Noback M."/>
            <person name="Noone D."/>
            <person name="O'Reilly M."/>
            <person name="Ogawa K."/>
            <person name="Ogiwara A."/>
            <person name="Oudega B."/>
            <person name="Park S.-H."/>
            <person name="Parro V."/>
            <person name="Pohl T.M."/>
            <person name="Portetelle D."/>
            <person name="Porwollik S."/>
            <person name="Prescott A.M."/>
            <person name="Presecan E."/>
            <person name="Pujic P."/>
            <person name="Purnelle B."/>
            <person name="Rapoport G."/>
            <person name="Rey M."/>
            <person name="Reynolds S."/>
            <person name="Rieger M."/>
            <person name="Rivolta C."/>
            <person name="Rocha E."/>
            <person name="Roche B."/>
            <person name="Rose M."/>
            <person name="Sadaie Y."/>
            <person name="Sato T."/>
            <person name="Scanlan E."/>
            <person name="Schleich S."/>
            <person name="Schroeter R."/>
            <person name="Scoffone F."/>
            <person name="Sekiguchi J."/>
            <person name="Sekowska A."/>
            <person name="Seror S.J."/>
            <person name="Serror P."/>
            <person name="Shin B.-S."/>
            <person name="Soldo B."/>
            <person name="Sorokin A."/>
            <person name="Tacconi E."/>
            <person name="Takagi T."/>
            <person name="Takahashi H."/>
            <person name="Takemaru K."/>
            <person name="Takeuchi M."/>
            <person name="Tamakoshi A."/>
            <person name="Tanaka T."/>
            <person name="Terpstra P."/>
            <person name="Tognoni A."/>
            <person name="Tosato V."/>
            <person name="Uchiyama S."/>
            <person name="Vandenbol M."/>
            <person name="Vannier F."/>
            <person name="Vassarotti A."/>
            <person name="Viari A."/>
            <person name="Wambutt R."/>
            <person name="Wedler E."/>
            <person name="Wedler H."/>
            <person name="Weitzenegger T."/>
            <person name="Winters P."/>
            <person name="Wipat A."/>
            <person name="Yamamoto H."/>
            <person name="Yamane K."/>
            <person name="Yasumoto K."/>
            <person name="Yata K."/>
            <person name="Yoshida K."/>
            <person name="Yoshikawa H.-F."/>
            <person name="Zumstein E."/>
            <person name="Yoshikawa H."/>
            <person name="Danchin A."/>
        </authorList>
    </citation>
    <scope>NUCLEOTIDE SEQUENCE [LARGE SCALE GENOMIC DNA]</scope>
    <source>
        <strain>168</strain>
    </source>
</reference>
<proteinExistence type="predicted"/>
<organism>
    <name type="scientific">Bacillus subtilis (strain 168)</name>
    <dbReference type="NCBI Taxonomy" id="224308"/>
    <lineage>
        <taxon>Bacteria</taxon>
        <taxon>Bacillati</taxon>
        <taxon>Bacillota</taxon>
        <taxon>Bacilli</taxon>
        <taxon>Bacillales</taxon>
        <taxon>Bacillaceae</taxon>
        <taxon>Bacillus</taxon>
    </lineage>
</organism>
<gene>
    <name type="primary">yoxC</name>
    <name type="ordered locus">BSU18510</name>
</gene>
<protein>
    <recommendedName>
        <fullName>Uncharacterized protein YoxC</fullName>
    </recommendedName>
</protein>
<keyword id="KW-1185">Reference proteome</keyword>
<accession>P28670</accession>
<dbReference type="EMBL" id="AL009126">
    <property type="protein sequence ID" value="CAB13744.1"/>
    <property type="molecule type" value="Genomic_DNA"/>
</dbReference>
<dbReference type="PIR" id="C69930">
    <property type="entry name" value="C69930"/>
</dbReference>
<dbReference type="RefSeq" id="NP_389733.1">
    <property type="nucleotide sequence ID" value="NC_000964.3"/>
</dbReference>
<dbReference type="RefSeq" id="WP_009967371.1">
    <property type="nucleotide sequence ID" value="NZ_OZ025638.1"/>
</dbReference>
<dbReference type="SMR" id="P28670"/>
<dbReference type="FunCoup" id="P28670">
    <property type="interactions" value="83"/>
</dbReference>
<dbReference type="STRING" id="224308.BSU18510"/>
<dbReference type="PaxDb" id="224308-BSU18510"/>
<dbReference type="DNASU" id="940083"/>
<dbReference type="EnsemblBacteria" id="CAB13744">
    <property type="protein sequence ID" value="CAB13744"/>
    <property type="gene ID" value="BSU_18510"/>
</dbReference>
<dbReference type="GeneID" id="940083"/>
<dbReference type="KEGG" id="bsu:BSU18510"/>
<dbReference type="PATRIC" id="fig|224308.179.peg.2018"/>
<dbReference type="eggNOG" id="COG4768">
    <property type="taxonomic scope" value="Bacteria"/>
</dbReference>
<dbReference type="InParanoid" id="P28670"/>
<dbReference type="OrthoDB" id="2933869at2"/>
<dbReference type="BioCyc" id="BSUB:BSU18510-MONOMER"/>
<dbReference type="Proteomes" id="UP000001570">
    <property type="component" value="Chromosome"/>
</dbReference>
<dbReference type="InterPro" id="IPR009293">
    <property type="entry name" value="UPF0478"/>
</dbReference>
<dbReference type="PANTHER" id="PTHR40070">
    <property type="entry name" value="UPF0478 PROTEIN YTXG"/>
    <property type="match status" value="1"/>
</dbReference>
<dbReference type="PANTHER" id="PTHR40070:SF1">
    <property type="entry name" value="UPF0478 PROTEIN YTXG"/>
    <property type="match status" value="1"/>
</dbReference>
<dbReference type="Pfam" id="PF06103">
    <property type="entry name" value="DUF948"/>
    <property type="match status" value="1"/>
</dbReference>